<accession>Q8UVR8</accession>
<name>CSF12_TAKRU</name>
<proteinExistence type="inferred from homology"/>
<feature type="signal peptide" evidence="2">
    <location>
        <begin position="1"/>
        <end position="18"/>
    </location>
</feature>
<feature type="chain" id="PRO_0000249008" description="Macrophage colony-stimulating factor 1 receptor 2">
    <location>
        <begin position="19"/>
        <end position="1019"/>
    </location>
</feature>
<feature type="topological domain" description="Extracellular" evidence="2">
    <location>
        <begin position="19"/>
        <end position="576"/>
    </location>
</feature>
<feature type="transmembrane region" description="Helical" evidence="2">
    <location>
        <begin position="577"/>
        <end position="597"/>
    </location>
</feature>
<feature type="topological domain" description="Cytoplasmic" evidence="2">
    <location>
        <begin position="598"/>
        <end position="1019"/>
    </location>
</feature>
<feature type="domain" description="Ig-like C2-type 1">
    <location>
        <begin position="37"/>
        <end position="109"/>
    </location>
</feature>
<feature type="domain" description="Ig-like C2-type 2">
    <location>
        <begin position="106"/>
        <end position="212"/>
    </location>
</feature>
<feature type="domain" description="Ig-like C2-type 3">
    <location>
        <begin position="224"/>
        <end position="312"/>
    </location>
</feature>
<feature type="domain" description="Ig-like C2-type 4">
    <location>
        <begin position="383"/>
        <end position="474"/>
    </location>
</feature>
<feature type="domain" description="Ig-like C2-type 5">
    <location>
        <begin position="487"/>
        <end position="567"/>
    </location>
</feature>
<feature type="domain" description="Protein kinase" evidence="4">
    <location>
        <begin position="641"/>
        <end position="963"/>
    </location>
</feature>
<feature type="region of interest" description="Regulatory juxtamembrane domain" evidence="1">
    <location>
        <begin position="601"/>
        <end position="633"/>
    </location>
</feature>
<feature type="region of interest" description="Activation loop" evidence="1">
    <location>
        <begin position="845"/>
        <end position="867"/>
    </location>
</feature>
<feature type="region of interest" description="Disordered" evidence="6">
    <location>
        <begin position="970"/>
        <end position="1001"/>
    </location>
</feature>
<feature type="compositionally biased region" description="Basic and acidic residues" evidence="6">
    <location>
        <begin position="979"/>
        <end position="1001"/>
    </location>
</feature>
<feature type="active site" description="Proton acceptor" evidence="4 5">
    <location>
        <position position="827"/>
    </location>
</feature>
<feature type="binding site" evidence="4">
    <location>
        <begin position="647"/>
        <end position="655"/>
    </location>
    <ligand>
        <name>ATP</name>
        <dbReference type="ChEBI" id="CHEBI:30616"/>
    </ligand>
</feature>
<feature type="binding site" evidence="4">
    <location>
        <position position="674"/>
    </location>
    <ligand>
        <name>ATP</name>
        <dbReference type="ChEBI" id="CHEBI:30616"/>
    </ligand>
</feature>
<feature type="modified residue" description="Phosphotyrosine; by autocatalysis" evidence="1">
    <location>
        <position position="620"/>
    </location>
</feature>
<feature type="modified residue" description="Phosphotyrosine; by autocatalysis" evidence="1">
    <location>
        <position position="756"/>
    </location>
</feature>
<feature type="modified residue" description="Phosphotyrosine; by autocatalysis" evidence="1">
    <location>
        <position position="778"/>
    </location>
</feature>
<feature type="modified residue" description="Phosphotyrosine; by autocatalysis" evidence="1">
    <location>
        <position position="858"/>
    </location>
</feature>
<feature type="modified residue" description="Phosphotyrosine; by autocatalysis" evidence="1">
    <location>
        <position position="974"/>
    </location>
</feature>
<feature type="modified residue" description="Phosphotyrosine; by autocatalysis" evidence="1">
    <location>
        <position position="1016"/>
    </location>
</feature>
<feature type="glycosylation site" description="N-linked (GlcNAc...) asparagine" evidence="2">
    <location>
        <position position="96"/>
    </location>
</feature>
<feature type="glycosylation site" description="N-linked (GlcNAc...) asparagine" evidence="2">
    <location>
        <position position="148"/>
    </location>
</feature>
<feature type="glycosylation site" description="N-linked (GlcNAc...) asparagine" evidence="2">
    <location>
        <position position="169"/>
    </location>
</feature>
<feature type="glycosylation site" description="N-linked (GlcNAc...) asparagine" evidence="2">
    <location>
        <position position="249"/>
    </location>
</feature>
<feature type="glycosylation site" description="N-linked (GlcNAc...) asparagine" evidence="2">
    <location>
        <position position="342"/>
    </location>
</feature>
<feature type="glycosylation site" description="N-linked (GlcNAc...) asparagine" evidence="2">
    <location>
        <position position="346"/>
    </location>
</feature>
<feature type="glycosylation site" description="N-linked (GlcNAc...) asparagine" evidence="2">
    <location>
        <position position="355"/>
    </location>
</feature>
<feature type="glycosylation site" description="N-linked (GlcNAc...) asparagine" evidence="2">
    <location>
        <position position="369"/>
    </location>
</feature>
<feature type="glycosylation site" description="N-linked (GlcNAc...) asparagine" evidence="2">
    <location>
        <position position="379"/>
    </location>
</feature>
<feature type="glycosylation site" description="N-linked (GlcNAc...) asparagine" evidence="2">
    <location>
        <position position="408"/>
    </location>
</feature>
<feature type="glycosylation site" description="N-linked (GlcNAc...) asparagine" evidence="2">
    <location>
        <position position="422"/>
    </location>
</feature>
<feature type="glycosylation site" description="N-linked (GlcNAc...) asparagine" evidence="2">
    <location>
        <position position="429"/>
    </location>
</feature>
<feature type="glycosylation site" description="N-linked (GlcNAc...) asparagine" evidence="2">
    <location>
        <position position="433"/>
    </location>
</feature>
<feature type="glycosylation site" description="N-linked (GlcNAc...) asparagine" evidence="2">
    <location>
        <position position="514"/>
    </location>
</feature>
<feature type="disulfide bond" evidence="3">
    <location>
        <begin position="52"/>
        <end position="92"/>
    </location>
</feature>
<feature type="disulfide bond" evidence="3">
    <location>
        <begin position="139"/>
        <end position="193"/>
    </location>
</feature>
<feature type="disulfide bond" evidence="3">
    <location>
        <begin position="239"/>
        <end position="294"/>
    </location>
</feature>
<feature type="disulfide bond" evidence="3">
    <location>
        <begin position="490"/>
        <end position="552"/>
    </location>
</feature>
<keyword id="KW-0067">ATP-binding</keyword>
<keyword id="KW-1003">Cell membrane</keyword>
<keyword id="KW-1015">Disulfide bond</keyword>
<keyword id="KW-0325">Glycoprotein</keyword>
<keyword id="KW-0391">Immunity</keyword>
<keyword id="KW-0393">Immunoglobulin domain</keyword>
<keyword id="KW-0395">Inflammatory response</keyword>
<keyword id="KW-0399">Innate immunity</keyword>
<keyword id="KW-0418">Kinase</keyword>
<keyword id="KW-0472">Membrane</keyword>
<keyword id="KW-0547">Nucleotide-binding</keyword>
<keyword id="KW-0597">Phosphoprotein</keyword>
<keyword id="KW-0675">Receptor</keyword>
<keyword id="KW-1185">Reference proteome</keyword>
<keyword id="KW-0677">Repeat</keyword>
<keyword id="KW-0732">Signal</keyword>
<keyword id="KW-0808">Transferase</keyword>
<keyword id="KW-0812">Transmembrane</keyword>
<keyword id="KW-1133">Transmembrane helix</keyword>
<keyword id="KW-0829">Tyrosine-protein kinase</keyword>
<keyword id="KW-0832">Ubl conjugation</keyword>
<dbReference type="EC" id="2.7.10.1"/>
<dbReference type="EMBL" id="AF411927">
    <property type="protein sequence ID" value="AAL50568.1"/>
    <property type="molecule type" value="Genomic_DNA"/>
</dbReference>
<dbReference type="SMR" id="Q8UVR8"/>
<dbReference type="STRING" id="31033.ENSTRUP00000006673"/>
<dbReference type="GlyCosmos" id="Q8UVR8">
    <property type="glycosylation" value="14 sites, No reported glycans"/>
</dbReference>
<dbReference type="eggNOG" id="KOG0200">
    <property type="taxonomic scope" value="Eukaryota"/>
</dbReference>
<dbReference type="InParanoid" id="Q8UVR8"/>
<dbReference type="Proteomes" id="UP000005226">
    <property type="component" value="Unplaced"/>
</dbReference>
<dbReference type="GO" id="GO:1990682">
    <property type="term" value="C:CSF1-CSF1R complex"/>
    <property type="evidence" value="ECO:0007669"/>
    <property type="project" value="TreeGrafter"/>
</dbReference>
<dbReference type="GO" id="GO:0005886">
    <property type="term" value="C:plasma membrane"/>
    <property type="evidence" value="ECO:0007669"/>
    <property type="project" value="UniProtKB-SubCell"/>
</dbReference>
<dbReference type="GO" id="GO:0043235">
    <property type="term" value="C:receptor complex"/>
    <property type="evidence" value="ECO:0007669"/>
    <property type="project" value="TreeGrafter"/>
</dbReference>
<dbReference type="GO" id="GO:0005524">
    <property type="term" value="F:ATP binding"/>
    <property type="evidence" value="ECO:0007669"/>
    <property type="project" value="UniProtKB-KW"/>
</dbReference>
<dbReference type="GO" id="GO:0019955">
    <property type="term" value="F:cytokine binding"/>
    <property type="evidence" value="ECO:0007669"/>
    <property type="project" value="InterPro"/>
</dbReference>
<dbReference type="GO" id="GO:0019838">
    <property type="term" value="F:growth factor binding"/>
    <property type="evidence" value="ECO:0007669"/>
    <property type="project" value="TreeGrafter"/>
</dbReference>
<dbReference type="GO" id="GO:0005011">
    <property type="term" value="F:macrophage colony-stimulating factor receptor activity"/>
    <property type="evidence" value="ECO:0007669"/>
    <property type="project" value="TreeGrafter"/>
</dbReference>
<dbReference type="GO" id="GO:0007169">
    <property type="term" value="P:cell surface receptor protein tyrosine kinase signaling pathway"/>
    <property type="evidence" value="ECO:0007669"/>
    <property type="project" value="InterPro"/>
</dbReference>
<dbReference type="GO" id="GO:0006954">
    <property type="term" value="P:inflammatory response"/>
    <property type="evidence" value="ECO:0007669"/>
    <property type="project" value="UniProtKB-KW"/>
</dbReference>
<dbReference type="GO" id="GO:0045087">
    <property type="term" value="P:innate immune response"/>
    <property type="evidence" value="ECO:0007669"/>
    <property type="project" value="UniProtKB-KW"/>
</dbReference>
<dbReference type="GO" id="GO:0030316">
    <property type="term" value="P:osteoclast differentiation"/>
    <property type="evidence" value="ECO:0007669"/>
    <property type="project" value="TreeGrafter"/>
</dbReference>
<dbReference type="GO" id="GO:0030335">
    <property type="term" value="P:positive regulation of cell migration"/>
    <property type="evidence" value="ECO:0007669"/>
    <property type="project" value="TreeGrafter"/>
</dbReference>
<dbReference type="GO" id="GO:0043408">
    <property type="term" value="P:regulation of MAPK cascade"/>
    <property type="evidence" value="ECO:0007669"/>
    <property type="project" value="TreeGrafter"/>
</dbReference>
<dbReference type="CDD" id="cd00096">
    <property type="entry name" value="Ig"/>
    <property type="match status" value="1"/>
</dbReference>
<dbReference type="FunFam" id="3.30.200.20:FF:000025">
    <property type="entry name" value="Platelet-derived growth factor receptor alpha"/>
    <property type="match status" value="1"/>
</dbReference>
<dbReference type="FunFam" id="1.10.510.10:FF:000140">
    <property type="entry name" value="Platelet-derived growth factor receptor beta"/>
    <property type="match status" value="1"/>
</dbReference>
<dbReference type="Gene3D" id="2.60.40.10">
    <property type="entry name" value="Immunoglobulins"/>
    <property type="match status" value="5"/>
</dbReference>
<dbReference type="Gene3D" id="3.30.200.20">
    <property type="entry name" value="Phosphorylase Kinase, domain 1"/>
    <property type="match status" value="1"/>
</dbReference>
<dbReference type="Gene3D" id="1.10.510.10">
    <property type="entry name" value="Transferase(Phosphotransferase) domain 1"/>
    <property type="match status" value="1"/>
</dbReference>
<dbReference type="InterPro" id="IPR030658">
    <property type="entry name" value="CSF-1_receptor"/>
</dbReference>
<dbReference type="InterPro" id="IPR007110">
    <property type="entry name" value="Ig-like_dom"/>
</dbReference>
<dbReference type="InterPro" id="IPR036179">
    <property type="entry name" value="Ig-like_dom_sf"/>
</dbReference>
<dbReference type="InterPro" id="IPR013783">
    <property type="entry name" value="Ig-like_fold"/>
</dbReference>
<dbReference type="InterPro" id="IPR003599">
    <property type="entry name" value="Ig_sub"/>
</dbReference>
<dbReference type="InterPro" id="IPR003598">
    <property type="entry name" value="Ig_sub2"/>
</dbReference>
<dbReference type="InterPro" id="IPR011009">
    <property type="entry name" value="Kinase-like_dom_sf"/>
</dbReference>
<dbReference type="InterPro" id="IPR000719">
    <property type="entry name" value="Prot_kinase_dom"/>
</dbReference>
<dbReference type="InterPro" id="IPR017441">
    <property type="entry name" value="Protein_kinase_ATP_BS"/>
</dbReference>
<dbReference type="InterPro" id="IPR050122">
    <property type="entry name" value="RTK"/>
</dbReference>
<dbReference type="InterPro" id="IPR001245">
    <property type="entry name" value="Ser-Thr/Tyr_kinase_cat_dom"/>
</dbReference>
<dbReference type="InterPro" id="IPR008266">
    <property type="entry name" value="Tyr_kinase_AS"/>
</dbReference>
<dbReference type="InterPro" id="IPR020635">
    <property type="entry name" value="Tyr_kinase_cat_dom"/>
</dbReference>
<dbReference type="InterPro" id="IPR001824">
    <property type="entry name" value="Tyr_kinase_rcpt_3_CS"/>
</dbReference>
<dbReference type="PANTHER" id="PTHR24416:SF47">
    <property type="entry name" value="MACROPHAGE COLONY-STIMULATING FACTOR 1 RECEPTOR"/>
    <property type="match status" value="1"/>
</dbReference>
<dbReference type="PANTHER" id="PTHR24416">
    <property type="entry name" value="TYROSINE-PROTEIN KINASE RECEPTOR"/>
    <property type="match status" value="1"/>
</dbReference>
<dbReference type="Pfam" id="PF13927">
    <property type="entry name" value="Ig_3"/>
    <property type="match status" value="1"/>
</dbReference>
<dbReference type="Pfam" id="PF25305">
    <property type="entry name" value="Ig_PDGFR_d4"/>
    <property type="match status" value="1"/>
</dbReference>
<dbReference type="Pfam" id="PF07714">
    <property type="entry name" value="PK_Tyr_Ser-Thr"/>
    <property type="match status" value="1"/>
</dbReference>
<dbReference type="PIRSF" id="PIRSF500947">
    <property type="entry name" value="CSF-1_receptor"/>
    <property type="match status" value="1"/>
</dbReference>
<dbReference type="PIRSF" id="PIRSF000615">
    <property type="entry name" value="TyrPK_CSF1-R"/>
    <property type="match status" value="1"/>
</dbReference>
<dbReference type="SMART" id="SM00409">
    <property type="entry name" value="IG"/>
    <property type="match status" value="4"/>
</dbReference>
<dbReference type="SMART" id="SM00408">
    <property type="entry name" value="IGc2"/>
    <property type="match status" value="2"/>
</dbReference>
<dbReference type="SMART" id="SM00219">
    <property type="entry name" value="TyrKc"/>
    <property type="match status" value="1"/>
</dbReference>
<dbReference type="SUPFAM" id="SSF48726">
    <property type="entry name" value="Immunoglobulin"/>
    <property type="match status" value="4"/>
</dbReference>
<dbReference type="SUPFAM" id="SSF56112">
    <property type="entry name" value="Protein kinase-like (PK-like)"/>
    <property type="match status" value="1"/>
</dbReference>
<dbReference type="PROSITE" id="PS50835">
    <property type="entry name" value="IG_LIKE"/>
    <property type="match status" value="1"/>
</dbReference>
<dbReference type="PROSITE" id="PS00107">
    <property type="entry name" value="PROTEIN_KINASE_ATP"/>
    <property type="match status" value="1"/>
</dbReference>
<dbReference type="PROSITE" id="PS50011">
    <property type="entry name" value="PROTEIN_KINASE_DOM"/>
    <property type="match status" value="1"/>
</dbReference>
<dbReference type="PROSITE" id="PS00109">
    <property type="entry name" value="PROTEIN_KINASE_TYR"/>
    <property type="match status" value="1"/>
</dbReference>
<dbReference type="PROSITE" id="PS00240">
    <property type="entry name" value="RECEPTOR_TYR_KIN_III"/>
    <property type="match status" value="1"/>
</dbReference>
<sequence>MKSYCLLLSITLSCCCSAEDLPDPPSIHLNSKYLPNQAEAILTAGTPFTLRCTGASSVHWSSSAFCLLYHGRLVDPIDVQRADPRHTGTYCCGYTNQSLEHLSTWIHLYVKDPADPSTVFVTPRNSPRVKEGQDFLYRCLLTDPSVTNLTFQPEDNIQGSGQHLPVGMNVTVDPQRGALIQDVQRSFSGQYVCSGWKDGRHFISRSFHLLVAPRLPPPSVAIHQNKAVRLEGEKFEVTCVSSSTTHLFNVTWTHLTKKNFDVAVTREYRNSHMYISSTLMIAAVSQEDRGTYTCAAASEDGVTTATTHLIVLDSRFMTTYLKTWHANTKAKNKEISKEIDGNLTANSTSIDIEANRSSKLHMKMELIANVSTDGVHVNNISSSTTVEAYEGLDVILTFVTESYPPLSNQSWTKPTKVNNNNNVTMYQENYSINDTRSEASLLLRRVRQEDHGSYTFHFSNSFFSGSQNIDLRIYRSPSAIISVEKNTLTCSSSGYPVPTIAWYSCPGILKTCGNLTTTESSEADPTSEHDEENVRKLLNLPLSTGGDVTAECIASNQVGAFRKVFHLREHNSAFMSALIGAGSTAAILFLLLLVVFYKWRQKPKYEIRWKIIESTEGNHYTFVDPTLLPYNYKWEFPRDKLRLGAVLGSGAFGKVVEATAYGLGTDDVTRVAVKMLKPRALSEEREALMSELKILSHLGYHDNIVNLLGACTQGGPMLMITEYCSYGDLLNFLRARAQDFMASILSADEMEGDPFYKNMATLYGRLRSDSGISCCSDYQEMQPILGSAEKQQGVQMGGLSFGDLLSFSHQVAQGLDFLSTRNCIHRDVAARNVLLTDHRVAKICDFGLARDIQNDDSYIVQGNARLPVKWMAPESIFQCVYTVQSDVWSYGVLLWEIFSLGKSPYPNVAVDTHFYKMIKDGRHMTQPDFAPVEMYQLMTHCWSLEPTDRPTFKMICQLIDRLLQSNDDTNHQSYSNINETKKDDFKGGKSQRRGEEEEQRRQRGNLWIPLSVTNIYQLS</sequence>
<organism>
    <name type="scientific">Takifugu rubripes</name>
    <name type="common">Japanese pufferfish</name>
    <name type="synonym">Fugu rubripes</name>
    <dbReference type="NCBI Taxonomy" id="31033"/>
    <lineage>
        <taxon>Eukaryota</taxon>
        <taxon>Metazoa</taxon>
        <taxon>Chordata</taxon>
        <taxon>Craniata</taxon>
        <taxon>Vertebrata</taxon>
        <taxon>Euteleostomi</taxon>
        <taxon>Actinopterygii</taxon>
        <taxon>Neopterygii</taxon>
        <taxon>Teleostei</taxon>
        <taxon>Neoteleostei</taxon>
        <taxon>Acanthomorphata</taxon>
        <taxon>Eupercaria</taxon>
        <taxon>Tetraodontiformes</taxon>
        <taxon>Tetradontoidea</taxon>
        <taxon>Tetraodontidae</taxon>
        <taxon>Takifugu</taxon>
    </lineage>
</organism>
<reference key="1">
    <citation type="journal article" date="2002" name="Gene">
        <title>Identification and analysis of additional copies of the platelet-derived growth factor receptor and colony stimulating factor 1 receptor genes in fugu.</title>
        <authorList>
            <person name="Williams H."/>
            <person name="Brenner S."/>
            <person name="Venkatesh B."/>
        </authorList>
    </citation>
    <scope>NUCLEOTIDE SEQUENCE [GENOMIC DNA]</scope>
</reference>
<evidence type="ECO:0000250" key="1"/>
<evidence type="ECO:0000255" key="2"/>
<evidence type="ECO:0000255" key="3">
    <source>
        <dbReference type="PROSITE-ProRule" id="PRU00114"/>
    </source>
</evidence>
<evidence type="ECO:0000255" key="4">
    <source>
        <dbReference type="PROSITE-ProRule" id="PRU00159"/>
    </source>
</evidence>
<evidence type="ECO:0000255" key="5">
    <source>
        <dbReference type="PROSITE-ProRule" id="PRU10028"/>
    </source>
</evidence>
<evidence type="ECO:0000256" key="6">
    <source>
        <dbReference type="SAM" id="MobiDB-lite"/>
    </source>
</evidence>
<protein>
    <recommendedName>
        <fullName>Macrophage colony-stimulating factor 1 receptor 2</fullName>
        <shortName>CSF-1-R 2</shortName>
        <ecNumber>2.7.10.1</ecNumber>
    </recommendedName>
</protein>
<gene>
    <name type="primary">csf1r2</name>
</gene>
<comment type="function">
    <text evidence="1">Tyrosine-protein kinase that acts as a cell-surface receptor for CSF1 and plays an essential role in the regulation of survival, proliferation and differentiation of hematopoietic precursor cells, especially mononuclear phagocytes, such as macrophages and monocytes. Plays an important role in innate immunity and in inflammatory processes. Plays an important role in the regulation of osteoclast proliferation and differentiation, the regulation of bone resorption, and is required for normal bone development. Promotes reorganization of the actin cytoskeleton, regulates formation of membrane ruffles, cell adhesion and cell migration. Activates several signaling pathways in response to ligand binding (By similarity).</text>
</comment>
<comment type="catalytic activity">
    <reaction evidence="5">
        <text>L-tyrosyl-[protein] + ATP = O-phospho-L-tyrosyl-[protein] + ADP + H(+)</text>
        <dbReference type="Rhea" id="RHEA:10596"/>
        <dbReference type="Rhea" id="RHEA-COMP:10136"/>
        <dbReference type="Rhea" id="RHEA-COMP:20101"/>
        <dbReference type="ChEBI" id="CHEBI:15378"/>
        <dbReference type="ChEBI" id="CHEBI:30616"/>
        <dbReference type="ChEBI" id="CHEBI:46858"/>
        <dbReference type="ChEBI" id="CHEBI:61978"/>
        <dbReference type="ChEBI" id="CHEBI:456216"/>
        <dbReference type="EC" id="2.7.10.1"/>
    </reaction>
</comment>
<comment type="activity regulation">
    <text evidence="1">Present in an inactive conformation in the absence of bound ligand. CSF1 binding leads to dimerization and activation by autophosphorylation on tyrosine residues (By similarity).</text>
</comment>
<comment type="subunit">
    <text evidence="1">Monomer. Homodimer. Interacts with CSF1 (By similarity).</text>
</comment>
<comment type="subcellular location">
    <subcellularLocation>
        <location evidence="1">Cell membrane</location>
        <topology evidence="1">Single-pass type I membrane protein</topology>
    </subcellularLocation>
    <text evidence="1">The autophosphorylated receptor is ubiquitinated and internalized, leading to its degradation.</text>
</comment>
<comment type="domain">
    <text evidence="1">The juxtamembrane domain functions as autoinhibitory region. Phosphorylation of tyrosine residues in this region leads to a conformation change and activation of the kinase (By similarity).</text>
</comment>
<comment type="domain">
    <text evidence="1">The activation loop plays an important role in the regulation of kinase activity. Phosphorylation of tyrosine residues in this region leads to a conformation change and activation of the kinase (By similarity).</text>
</comment>
<comment type="PTM">
    <text evidence="1">Autophosphorylated in response to CSF1 binding. autophosphorylation, leading to its degradation.</text>
</comment>
<comment type="PTM">
    <text evidence="1">Ubiquitinated. Becomes rapidly polyubiquitinated after autophosphorylation, leading to its degradation (By similarity).</text>
</comment>
<comment type="similarity">
    <text evidence="4">Belongs to the protein kinase superfamily. Tyr protein kinase family. CSF-1/PDGF receptor subfamily.</text>
</comment>